<feature type="chain" id="PRO_0000053902" description="Pleckstrin homology-like domain family A member 3">
    <location>
        <begin position="1"/>
        <end position="127"/>
    </location>
</feature>
<feature type="domain" description="PH">
    <location>
        <begin position="8"/>
        <end position="127"/>
    </location>
</feature>
<feature type="sequence variant" id="VAR_050515" description="In dbSNP:rs35383942.">
    <original>R</original>
    <variation>Q</variation>
    <location>
        <position position="28"/>
    </location>
</feature>
<feature type="sequence conflict" description="In Ref. 3; BAD96364." evidence="4" ref="3">
    <original>T</original>
    <variation>A</variation>
    <location>
        <position position="8"/>
    </location>
</feature>
<feature type="sequence conflict" description="In Ref. 2; BAC11454." evidence="4" ref="2">
    <original>P</original>
    <variation>L</variation>
    <location>
        <position position="88"/>
    </location>
</feature>
<comment type="function">
    <text evidence="3">p53/TP53-regulated repressor of Akt/AKT1 signaling. Represses AKT1 by preventing AKT1-binding to membrane lipids, thereby inhibiting AKT1 translocation to the cellular membrane and activation. Contributes to p53/TP53-dependent apoptosis by repressing AKT1 activity. Its direct transcription regulation by p53/TP53 may explain how p53/TP53 can negatively regulate AKT1. May act as a tumor suppressor.</text>
</comment>
<comment type="subcellular location">
    <subcellularLocation>
        <location evidence="3">Cytoplasm</location>
    </subcellularLocation>
    <subcellularLocation>
        <location evidence="3">Membrane</location>
        <topology evidence="3">Peripheral membrane protein</topology>
    </subcellularLocation>
</comment>
<comment type="tissue specificity">
    <text evidence="1">Widely expressed with lowest expression in liver and spleen.</text>
</comment>
<comment type="induction">
    <text evidence="2 3">By p53/TP53; expression is directly activated by TP53. TP53 phosphorylation on 'Ser-15' is required to activate the PHLDA3 promoter.</text>
</comment>
<comment type="domain">
    <text>The PH domain binds phosphoinositides with a broad specificity. It competes with the PH domain of AKT1 and directly interferes with AKT1 binding to phosphatidylinositol 4,5-bisphosphate (PIP2) and phosphatidylinositol 3,4,5-trisphosphate (PIP3), preventing AKT1 association to membrane lipids and subsequent activation of AKT1 signaling.</text>
</comment>
<comment type="miscellaneous">
    <text>PHLDA3 genomic locus is frequently observed in primary lung cancers, suggesting a role in tumor suppression.</text>
</comment>
<comment type="similarity">
    <text evidence="4">Belongs to the PHLDA3 family.</text>
</comment>
<protein>
    <recommendedName>
        <fullName>Pleckstrin homology-like domain family A member 3</fullName>
    </recommendedName>
    <alternativeName>
        <fullName>TDAG51/Ipl homolog 1</fullName>
    </alternativeName>
</protein>
<reference key="1">
    <citation type="journal article" date="1999" name="Mamm. Genome">
        <title>A novel pleckstrin homology-related gene family defined by Ipl/Tssc3, TDAG51, and Tih1: tissue-specific expression, chromosomal location, and parental imprinting.</title>
        <authorList>
            <person name="Frank D."/>
            <person name="Mendelsohn C.L."/>
            <person name="Ciccone E."/>
            <person name="Svensson K."/>
            <person name="Ohlsson R."/>
            <person name="Tycko B."/>
        </authorList>
    </citation>
    <scope>NUCLEOTIDE SEQUENCE [MRNA]</scope>
    <scope>TISSUE SPECIFICITY</scope>
</reference>
<reference key="2">
    <citation type="journal article" date="2004" name="Nat. Genet.">
        <title>Complete sequencing and characterization of 21,243 full-length human cDNAs.</title>
        <authorList>
            <person name="Ota T."/>
            <person name="Suzuki Y."/>
            <person name="Nishikawa T."/>
            <person name="Otsuki T."/>
            <person name="Sugiyama T."/>
            <person name="Irie R."/>
            <person name="Wakamatsu A."/>
            <person name="Hayashi K."/>
            <person name="Sato H."/>
            <person name="Nagai K."/>
            <person name="Kimura K."/>
            <person name="Makita H."/>
            <person name="Sekine M."/>
            <person name="Obayashi M."/>
            <person name="Nishi T."/>
            <person name="Shibahara T."/>
            <person name="Tanaka T."/>
            <person name="Ishii S."/>
            <person name="Yamamoto J."/>
            <person name="Saito K."/>
            <person name="Kawai Y."/>
            <person name="Isono Y."/>
            <person name="Nakamura Y."/>
            <person name="Nagahari K."/>
            <person name="Murakami K."/>
            <person name="Yasuda T."/>
            <person name="Iwayanagi T."/>
            <person name="Wagatsuma M."/>
            <person name="Shiratori A."/>
            <person name="Sudo H."/>
            <person name="Hosoiri T."/>
            <person name="Kaku Y."/>
            <person name="Kodaira H."/>
            <person name="Kondo H."/>
            <person name="Sugawara M."/>
            <person name="Takahashi M."/>
            <person name="Kanda K."/>
            <person name="Yokoi T."/>
            <person name="Furuya T."/>
            <person name="Kikkawa E."/>
            <person name="Omura Y."/>
            <person name="Abe K."/>
            <person name="Kamihara K."/>
            <person name="Katsuta N."/>
            <person name="Sato K."/>
            <person name="Tanikawa M."/>
            <person name="Yamazaki M."/>
            <person name="Ninomiya K."/>
            <person name="Ishibashi T."/>
            <person name="Yamashita H."/>
            <person name="Murakawa K."/>
            <person name="Fujimori K."/>
            <person name="Tanai H."/>
            <person name="Kimata M."/>
            <person name="Watanabe M."/>
            <person name="Hiraoka S."/>
            <person name="Chiba Y."/>
            <person name="Ishida S."/>
            <person name="Ono Y."/>
            <person name="Takiguchi S."/>
            <person name="Watanabe S."/>
            <person name="Yosida M."/>
            <person name="Hotuta T."/>
            <person name="Kusano J."/>
            <person name="Kanehori K."/>
            <person name="Takahashi-Fujii A."/>
            <person name="Hara H."/>
            <person name="Tanase T.-O."/>
            <person name="Nomura Y."/>
            <person name="Togiya S."/>
            <person name="Komai F."/>
            <person name="Hara R."/>
            <person name="Takeuchi K."/>
            <person name="Arita M."/>
            <person name="Imose N."/>
            <person name="Musashino K."/>
            <person name="Yuuki H."/>
            <person name="Oshima A."/>
            <person name="Sasaki N."/>
            <person name="Aotsuka S."/>
            <person name="Yoshikawa Y."/>
            <person name="Matsunawa H."/>
            <person name="Ichihara T."/>
            <person name="Shiohata N."/>
            <person name="Sano S."/>
            <person name="Moriya S."/>
            <person name="Momiyama H."/>
            <person name="Satoh N."/>
            <person name="Takami S."/>
            <person name="Terashima Y."/>
            <person name="Suzuki O."/>
            <person name="Nakagawa S."/>
            <person name="Senoh A."/>
            <person name="Mizoguchi H."/>
            <person name="Goto Y."/>
            <person name="Shimizu F."/>
            <person name="Wakebe H."/>
            <person name="Hishigaki H."/>
            <person name="Watanabe T."/>
            <person name="Sugiyama A."/>
            <person name="Takemoto M."/>
            <person name="Kawakami B."/>
            <person name="Yamazaki M."/>
            <person name="Watanabe K."/>
            <person name="Kumagai A."/>
            <person name="Itakura S."/>
            <person name="Fukuzumi Y."/>
            <person name="Fujimori Y."/>
            <person name="Komiyama M."/>
            <person name="Tashiro H."/>
            <person name="Tanigami A."/>
            <person name="Fujiwara T."/>
            <person name="Ono T."/>
            <person name="Yamada K."/>
            <person name="Fujii Y."/>
            <person name="Ozaki K."/>
            <person name="Hirao M."/>
            <person name="Ohmori Y."/>
            <person name="Kawabata A."/>
            <person name="Hikiji T."/>
            <person name="Kobatake N."/>
            <person name="Inagaki H."/>
            <person name="Ikema Y."/>
            <person name="Okamoto S."/>
            <person name="Okitani R."/>
            <person name="Kawakami T."/>
            <person name="Noguchi S."/>
            <person name="Itoh T."/>
            <person name="Shigeta K."/>
            <person name="Senba T."/>
            <person name="Matsumura K."/>
            <person name="Nakajima Y."/>
            <person name="Mizuno T."/>
            <person name="Morinaga M."/>
            <person name="Sasaki M."/>
            <person name="Togashi T."/>
            <person name="Oyama M."/>
            <person name="Hata H."/>
            <person name="Watanabe M."/>
            <person name="Komatsu T."/>
            <person name="Mizushima-Sugano J."/>
            <person name="Satoh T."/>
            <person name="Shirai Y."/>
            <person name="Takahashi Y."/>
            <person name="Nakagawa K."/>
            <person name="Okumura K."/>
            <person name="Nagase T."/>
            <person name="Nomura N."/>
            <person name="Kikuchi H."/>
            <person name="Masuho Y."/>
            <person name="Yamashita R."/>
            <person name="Nakai K."/>
            <person name="Yada T."/>
            <person name="Nakamura Y."/>
            <person name="Ohara O."/>
            <person name="Isogai T."/>
            <person name="Sugano S."/>
        </authorList>
    </citation>
    <scope>NUCLEOTIDE SEQUENCE [LARGE SCALE MRNA]</scope>
    <source>
        <tissue>Placenta</tissue>
        <tissue>Thalamus</tissue>
    </source>
</reference>
<reference key="3">
    <citation type="submission" date="2005-04" db="EMBL/GenBank/DDBJ databases">
        <authorList>
            <person name="Suzuki Y."/>
            <person name="Sugano S."/>
            <person name="Totoki Y."/>
            <person name="Toyoda A."/>
            <person name="Takeda T."/>
            <person name="Sakaki Y."/>
            <person name="Tanaka A."/>
            <person name="Yokoyama S."/>
        </authorList>
    </citation>
    <scope>NUCLEOTIDE SEQUENCE [LARGE SCALE MRNA]</scope>
    <source>
        <tissue>Cerebellum</tissue>
    </source>
</reference>
<reference key="4">
    <citation type="submission" date="2005-07" db="EMBL/GenBank/DDBJ databases">
        <authorList>
            <person name="Mural R.J."/>
            <person name="Istrail S."/>
            <person name="Sutton G.G."/>
            <person name="Florea L."/>
            <person name="Halpern A.L."/>
            <person name="Mobarry C.M."/>
            <person name="Lippert R."/>
            <person name="Walenz B."/>
            <person name="Shatkay H."/>
            <person name="Dew I."/>
            <person name="Miller J.R."/>
            <person name="Flanigan M.J."/>
            <person name="Edwards N.J."/>
            <person name="Bolanos R."/>
            <person name="Fasulo D."/>
            <person name="Halldorsson B.V."/>
            <person name="Hannenhalli S."/>
            <person name="Turner R."/>
            <person name="Yooseph S."/>
            <person name="Lu F."/>
            <person name="Nusskern D.R."/>
            <person name="Shue B.C."/>
            <person name="Zheng X.H."/>
            <person name="Zhong F."/>
            <person name="Delcher A.L."/>
            <person name="Huson D.H."/>
            <person name="Kravitz S.A."/>
            <person name="Mouchard L."/>
            <person name="Reinert K."/>
            <person name="Remington K.A."/>
            <person name="Clark A.G."/>
            <person name="Waterman M.S."/>
            <person name="Eichler E.E."/>
            <person name="Adams M.D."/>
            <person name="Hunkapiller M.W."/>
            <person name="Myers E.W."/>
            <person name="Venter J.C."/>
        </authorList>
    </citation>
    <scope>NUCLEOTIDE SEQUENCE [LARGE SCALE GENOMIC DNA]</scope>
</reference>
<reference key="5">
    <citation type="journal article" date="2004" name="Genome Res.">
        <title>The status, quality, and expansion of the NIH full-length cDNA project: the Mammalian Gene Collection (MGC).</title>
        <authorList>
            <consortium name="The MGC Project Team"/>
        </authorList>
    </citation>
    <scope>NUCLEOTIDE SEQUENCE [LARGE SCALE MRNA]</scope>
    <source>
        <tissue>Brain</tissue>
        <tissue>Skin</tissue>
    </source>
</reference>
<reference key="6">
    <citation type="journal article" date="2005" name="Oncogene">
        <title>A p53-dominant transcriptional response to cisplatin in testicular germ cell tumor-derived human embryonal carcinoma.</title>
        <authorList>
            <person name="Kerley-Hamilton J.S."/>
            <person name="Pike A.M."/>
            <person name="Li N."/>
            <person name="DiRenzo J."/>
            <person name="Spinella M.J."/>
        </authorList>
    </citation>
    <scope>INDUCTION BY TP53</scope>
</reference>
<reference key="7">
    <citation type="journal article" date="2009" name="Cell">
        <title>PH domain-only protein PHLDA3 is a p53-regulated repressor of Akt.</title>
        <authorList>
            <person name="Kawase T."/>
            <person name="Ohki R."/>
            <person name="Shibata T."/>
            <person name="Tsutsumi S."/>
            <person name="Kamimura N."/>
            <person name="Inazawa J."/>
            <person name="Ohta T."/>
            <person name="Ichikawa H."/>
            <person name="Aburatani H."/>
            <person name="Tashiro F."/>
            <person name="Taya Y."/>
        </authorList>
    </citation>
    <scope>FUNCTION</scope>
    <scope>PHOSPHOINOSITIDE-BINDING</scope>
    <scope>SUBCELLULAR LOCATION</scope>
    <scope>INDUCTION BY TP53</scope>
</reference>
<reference key="8">
    <citation type="journal article" date="2011" name="BMC Syst. Biol.">
        <title>Initial characterization of the human central proteome.</title>
        <authorList>
            <person name="Burkard T.R."/>
            <person name="Planyavsky M."/>
            <person name="Kaupe I."/>
            <person name="Breitwieser F.P."/>
            <person name="Buerckstuemmer T."/>
            <person name="Bennett K.L."/>
            <person name="Superti-Furga G."/>
            <person name="Colinge J."/>
        </authorList>
    </citation>
    <scope>IDENTIFICATION BY MASS SPECTROMETRY [LARGE SCALE ANALYSIS]</scope>
</reference>
<sequence length="127" mass="13891">MTAAATATVLKEGVLEKRSGGLLQLWKRKRCVLTERGLQLFEAKGTGGRPKELSFARIKAVECVESTGRHIYFTLVTEGGGEIDFRCPLEDPGWNAQITLGLVKFKNQQAIQTVRARQSLGTGTLVS</sequence>
<proteinExistence type="evidence at protein level"/>
<organism>
    <name type="scientific">Homo sapiens</name>
    <name type="common">Human</name>
    <dbReference type="NCBI Taxonomy" id="9606"/>
    <lineage>
        <taxon>Eukaryota</taxon>
        <taxon>Metazoa</taxon>
        <taxon>Chordata</taxon>
        <taxon>Craniata</taxon>
        <taxon>Vertebrata</taxon>
        <taxon>Euteleostomi</taxon>
        <taxon>Mammalia</taxon>
        <taxon>Eutheria</taxon>
        <taxon>Euarchontoglires</taxon>
        <taxon>Primates</taxon>
        <taxon>Haplorrhini</taxon>
        <taxon>Catarrhini</taxon>
        <taxon>Hominidae</taxon>
        <taxon>Homo</taxon>
    </lineage>
</organism>
<gene>
    <name type="primary">PHLDA3</name>
    <name type="synonym">TIH1</name>
</gene>
<evidence type="ECO:0000269" key="1">
    <source>
    </source>
</evidence>
<evidence type="ECO:0000269" key="2">
    <source>
    </source>
</evidence>
<evidence type="ECO:0000269" key="3">
    <source>
    </source>
</evidence>
<evidence type="ECO:0000305" key="4"/>
<dbReference type="EMBL" id="AF151100">
    <property type="protein sequence ID" value="AAD42081.1"/>
    <property type="molecule type" value="mRNA"/>
</dbReference>
<dbReference type="EMBL" id="AK075179">
    <property type="protein sequence ID" value="BAC11454.1"/>
    <property type="molecule type" value="mRNA"/>
</dbReference>
<dbReference type="EMBL" id="AK312115">
    <property type="protein sequence ID" value="BAG35051.1"/>
    <property type="molecule type" value="mRNA"/>
</dbReference>
<dbReference type="EMBL" id="AK222644">
    <property type="protein sequence ID" value="BAD96364.1"/>
    <property type="molecule type" value="mRNA"/>
</dbReference>
<dbReference type="EMBL" id="CH471067">
    <property type="protein sequence ID" value="EAW91369.1"/>
    <property type="molecule type" value="Genomic_DNA"/>
</dbReference>
<dbReference type="EMBL" id="BC014390">
    <property type="protein sequence ID" value="AAH14390.1"/>
    <property type="molecule type" value="mRNA"/>
</dbReference>
<dbReference type="EMBL" id="BC068273">
    <property type="protein sequence ID" value="AAH68273.1"/>
    <property type="molecule type" value="mRNA"/>
</dbReference>
<dbReference type="CCDS" id="CCDS1412.1"/>
<dbReference type="RefSeq" id="NP_036528.1">
    <property type="nucleotide sequence ID" value="NM_012396.5"/>
</dbReference>
<dbReference type="SMR" id="Q9Y5J5"/>
<dbReference type="BioGRID" id="117145">
    <property type="interactions" value="29"/>
</dbReference>
<dbReference type="FunCoup" id="Q9Y5J5">
    <property type="interactions" value="549"/>
</dbReference>
<dbReference type="IntAct" id="Q9Y5J5">
    <property type="interactions" value="3"/>
</dbReference>
<dbReference type="STRING" id="9606.ENSP00000356280"/>
<dbReference type="iPTMnet" id="Q9Y5J5"/>
<dbReference type="PhosphoSitePlus" id="Q9Y5J5"/>
<dbReference type="BioMuta" id="PHLDA3"/>
<dbReference type="DMDM" id="74735291"/>
<dbReference type="jPOST" id="Q9Y5J5"/>
<dbReference type="MassIVE" id="Q9Y5J5"/>
<dbReference type="PaxDb" id="9606-ENSP00000356280"/>
<dbReference type="PeptideAtlas" id="Q9Y5J5"/>
<dbReference type="ProteomicsDB" id="86420"/>
<dbReference type="Pumba" id="Q9Y5J5"/>
<dbReference type="Antibodypedia" id="34503">
    <property type="antibodies" value="161 antibodies from 30 providers"/>
</dbReference>
<dbReference type="DNASU" id="23612"/>
<dbReference type="Ensembl" id="ENST00000367309.1">
    <property type="protein sequence ID" value="ENSP00000356278.1"/>
    <property type="gene ID" value="ENSG00000174307.7"/>
</dbReference>
<dbReference type="Ensembl" id="ENST00000367311.5">
    <property type="protein sequence ID" value="ENSP00000356280.3"/>
    <property type="gene ID" value="ENSG00000174307.7"/>
</dbReference>
<dbReference type="GeneID" id="23612"/>
<dbReference type="KEGG" id="hsa:23612"/>
<dbReference type="MANE-Select" id="ENST00000367311.5">
    <property type="protein sequence ID" value="ENSP00000356280.3"/>
    <property type="RefSeq nucleotide sequence ID" value="NM_012396.5"/>
    <property type="RefSeq protein sequence ID" value="NP_036528.1"/>
</dbReference>
<dbReference type="UCSC" id="uc001gwq.5">
    <property type="organism name" value="human"/>
</dbReference>
<dbReference type="AGR" id="HGNC:8934"/>
<dbReference type="CTD" id="23612"/>
<dbReference type="DisGeNET" id="23612"/>
<dbReference type="GeneCards" id="PHLDA3"/>
<dbReference type="HGNC" id="HGNC:8934">
    <property type="gene designation" value="PHLDA3"/>
</dbReference>
<dbReference type="HPA" id="ENSG00000174307">
    <property type="expression patterns" value="Low tissue specificity"/>
</dbReference>
<dbReference type="MIM" id="607054">
    <property type="type" value="gene"/>
</dbReference>
<dbReference type="neXtProt" id="NX_Q9Y5J5"/>
<dbReference type="OpenTargets" id="ENSG00000174307"/>
<dbReference type="PharmGKB" id="PA33275"/>
<dbReference type="VEuPathDB" id="HostDB:ENSG00000174307"/>
<dbReference type="eggNOG" id="ENOG502S2UN">
    <property type="taxonomic scope" value="Eukaryota"/>
</dbReference>
<dbReference type="GeneTree" id="ENSGT00440000039564"/>
<dbReference type="HOGENOM" id="CLU_062639_1_0_1"/>
<dbReference type="InParanoid" id="Q9Y5J5"/>
<dbReference type="OMA" id="PSWNADI"/>
<dbReference type="OrthoDB" id="9630709at2759"/>
<dbReference type="PAN-GO" id="Q9Y5J5">
    <property type="GO annotations" value="4 GO annotations based on evolutionary models"/>
</dbReference>
<dbReference type="PhylomeDB" id="Q9Y5J5"/>
<dbReference type="TreeFam" id="TF332320"/>
<dbReference type="PathwayCommons" id="Q9Y5J5"/>
<dbReference type="SignaLink" id="Q9Y5J5"/>
<dbReference type="BioGRID-ORCS" id="23612">
    <property type="hits" value="12 hits in 1143 CRISPR screens"/>
</dbReference>
<dbReference type="ChiTaRS" id="PHLDA3">
    <property type="organism name" value="human"/>
</dbReference>
<dbReference type="GenomeRNAi" id="23612"/>
<dbReference type="Pharos" id="Q9Y5J5">
    <property type="development level" value="Tbio"/>
</dbReference>
<dbReference type="PRO" id="PR:Q9Y5J5"/>
<dbReference type="Proteomes" id="UP000005640">
    <property type="component" value="Chromosome 1"/>
</dbReference>
<dbReference type="RNAct" id="Q9Y5J5">
    <property type="molecule type" value="protein"/>
</dbReference>
<dbReference type="Bgee" id="ENSG00000174307">
    <property type="expression patterns" value="Expressed in tibial nerve and 151 other cell types or tissues"/>
</dbReference>
<dbReference type="GO" id="GO:0005737">
    <property type="term" value="C:cytoplasm"/>
    <property type="evidence" value="ECO:0007669"/>
    <property type="project" value="UniProtKB-SubCell"/>
</dbReference>
<dbReference type="GO" id="GO:0005886">
    <property type="term" value="C:plasma membrane"/>
    <property type="evidence" value="ECO:0000314"/>
    <property type="project" value="UniProtKB"/>
</dbReference>
<dbReference type="GO" id="GO:0005547">
    <property type="term" value="F:phosphatidylinositol-3,4,5-trisphosphate binding"/>
    <property type="evidence" value="ECO:0000314"/>
    <property type="project" value="UniProtKB"/>
</dbReference>
<dbReference type="GO" id="GO:0043325">
    <property type="term" value="F:phosphatidylinositol-3,4-bisphosphate binding"/>
    <property type="evidence" value="ECO:0000314"/>
    <property type="project" value="UniProtKB"/>
</dbReference>
<dbReference type="GO" id="GO:0080025">
    <property type="term" value="F:phosphatidylinositol-3,5-bisphosphate binding"/>
    <property type="evidence" value="ECO:0000314"/>
    <property type="project" value="UniProtKB"/>
</dbReference>
<dbReference type="GO" id="GO:0032266">
    <property type="term" value="F:phosphatidylinositol-3-phosphate binding"/>
    <property type="evidence" value="ECO:0000314"/>
    <property type="project" value="UniProtKB"/>
</dbReference>
<dbReference type="GO" id="GO:0005546">
    <property type="term" value="F:phosphatidylinositol-4,5-bisphosphate binding"/>
    <property type="evidence" value="ECO:0000314"/>
    <property type="project" value="UniProtKB"/>
</dbReference>
<dbReference type="GO" id="GO:0010314">
    <property type="term" value="F:phosphatidylinositol-5-phosphate binding"/>
    <property type="evidence" value="ECO:0000314"/>
    <property type="project" value="UniProtKB"/>
</dbReference>
<dbReference type="GO" id="GO:0009653">
    <property type="term" value="P:anatomical structure morphogenesis"/>
    <property type="evidence" value="ECO:0000304"/>
    <property type="project" value="ProtInc"/>
</dbReference>
<dbReference type="GO" id="GO:0042771">
    <property type="term" value="P:intrinsic apoptotic signaling pathway in response to DNA damage by p53 class mediator"/>
    <property type="evidence" value="ECO:0000314"/>
    <property type="project" value="UniProtKB"/>
</dbReference>
<dbReference type="GO" id="GO:0051898">
    <property type="term" value="P:negative regulation of phosphatidylinositol 3-kinase/protein kinase B signal transduction"/>
    <property type="evidence" value="ECO:0000314"/>
    <property type="project" value="UniProtKB"/>
</dbReference>
<dbReference type="GO" id="GO:0043065">
    <property type="term" value="P:positive regulation of apoptotic process"/>
    <property type="evidence" value="ECO:0000314"/>
    <property type="project" value="UniProtKB"/>
</dbReference>
<dbReference type="CDD" id="cd00821">
    <property type="entry name" value="PH"/>
    <property type="match status" value="1"/>
</dbReference>
<dbReference type="FunFam" id="2.30.29.30:FF:000270">
    <property type="entry name" value="Pleckstrin homology-like domain family A member 3"/>
    <property type="match status" value="1"/>
</dbReference>
<dbReference type="Gene3D" id="2.30.29.30">
    <property type="entry name" value="Pleckstrin-homology domain (PH domain)/Phosphotyrosine-binding domain (PTB)"/>
    <property type="match status" value="1"/>
</dbReference>
<dbReference type="InterPro" id="IPR011993">
    <property type="entry name" value="PH-like_dom_sf"/>
</dbReference>
<dbReference type="InterPro" id="IPR001849">
    <property type="entry name" value="PH_domain"/>
</dbReference>
<dbReference type="InterPro" id="IPR042832">
    <property type="entry name" value="PHLA1/2/3"/>
</dbReference>
<dbReference type="PANTHER" id="PTHR15478:SF5">
    <property type="entry name" value="PLECKSTRIN HOMOLOGY-LIKE DOMAIN FAMILY A MEMBER 3"/>
    <property type="match status" value="1"/>
</dbReference>
<dbReference type="PANTHER" id="PTHR15478">
    <property type="entry name" value="PLECKSTRIN HOMOLOGY-LIKE DOMAIN, PQ-RICH PROTEIN"/>
    <property type="match status" value="1"/>
</dbReference>
<dbReference type="Pfam" id="PF00169">
    <property type="entry name" value="PH"/>
    <property type="match status" value="1"/>
</dbReference>
<dbReference type="SMART" id="SM00233">
    <property type="entry name" value="PH"/>
    <property type="match status" value="1"/>
</dbReference>
<dbReference type="SUPFAM" id="SSF50729">
    <property type="entry name" value="PH domain-like"/>
    <property type="match status" value="1"/>
</dbReference>
<name>PHLA3_HUMAN</name>
<keyword id="KW-0053">Apoptosis</keyword>
<keyword id="KW-0963">Cytoplasm</keyword>
<keyword id="KW-0472">Membrane</keyword>
<keyword id="KW-1267">Proteomics identification</keyword>
<keyword id="KW-1185">Reference proteome</keyword>
<keyword id="KW-0043">Tumor suppressor</keyword>
<accession>Q9Y5J5</accession>
<accession>B2R5A4</accession>
<accession>Q53HD6</accession>
<accession>Q8NBW9</accession>